<comment type="function">
    <text evidence="1">Component of the cytochrome c oxidase, the last enzyme in the mitochondrial electron transport chain which drives oxidative phosphorylation. The respiratory chain contains 3 multisubunit complexes succinate dehydrogenase (complex II, CII), ubiquinol-cytochrome c oxidoreductase (cytochrome b-c1 complex, complex III, CIII) and cytochrome c oxidase (complex IV, CIV), that cooperate to transfer electrons derived from NADH and succinate to molecular oxygen, creating an electrochemical gradient over the inner membrane that drives transmembrane transport and the ATP synthase. Cytochrome c oxidase is the component of the respiratory chain that catalyzes the reduction of oxygen to water. Electrons originating from reduced cytochrome c in the intermembrane space (IMS) are transferred via the dinuclear copper A center (CU(A)) of subunit 2 and heme A of subunit 1 to the active site in subunit 1, a binuclear center (BNC) formed by heme A3 and copper B (CU(B)). The BNC reduces molecular oxygen to 2 water molecules using 4 electrons from cytochrome c in the IMS and 4 protons from the mitochondrial matrix.</text>
</comment>
<comment type="catalytic activity">
    <reaction evidence="1">
        <text>4 Fe(II)-[cytochrome c] + O2 + 8 H(+)(in) = 4 Fe(III)-[cytochrome c] + 2 H2O + 4 H(+)(out)</text>
        <dbReference type="Rhea" id="RHEA:11436"/>
        <dbReference type="Rhea" id="RHEA-COMP:10350"/>
        <dbReference type="Rhea" id="RHEA-COMP:14399"/>
        <dbReference type="ChEBI" id="CHEBI:15377"/>
        <dbReference type="ChEBI" id="CHEBI:15378"/>
        <dbReference type="ChEBI" id="CHEBI:15379"/>
        <dbReference type="ChEBI" id="CHEBI:29033"/>
        <dbReference type="ChEBI" id="CHEBI:29034"/>
        <dbReference type="EC" id="7.1.1.9"/>
    </reaction>
    <physiologicalReaction direction="left-to-right" evidence="1">
        <dbReference type="Rhea" id="RHEA:11437"/>
    </physiologicalReaction>
</comment>
<comment type="subunit">
    <text evidence="1">Component of the cytochrome c oxidase (complex IV, CIV), a multisubunit enzyme composed of a catalytic core of 3 subunits and several supernumerary subunits. The complex exists as a monomer or a dimer and forms supercomplexes (SCs) in the inner mitochondrial membrane with ubiquinol-cytochrome c oxidoreductase (cytochrome b-c1 complex, complex III, CIII).</text>
</comment>
<comment type="subcellular location">
    <subcellularLocation>
        <location evidence="1">Mitochondrion inner membrane</location>
        <topology evidence="1">Multi-pass membrane protein</topology>
    </subcellularLocation>
</comment>
<comment type="similarity">
    <text evidence="3">Belongs to the cytochrome c oxidase subunit 3 family.</text>
</comment>
<protein>
    <recommendedName>
        <fullName>Cytochrome c oxidase subunit 3</fullName>
        <ecNumber>7.1.1.9</ecNumber>
    </recommendedName>
    <alternativeName>
        <fullName>Cytochrome c oxidase polypeptide III</fullName>
    </alternativeName>
</protein>
<reference key="1">
    <citation type="submission" date="1996-10" db="EMBL/GenBank/DDBJ databases">
        <authorList>
            <person name="Kimura M."/>
        </authorList>
    </citation>
    <scope>NUCLEOTIDE SEQUENCE [GENOMIC DNA]</scope>
</reference>
<evidence type="ECO:0000250" key="1">
    <source>
        <dbReference type="UniProtKB" id="P00420"/>
    </source>
</evidence>
<evidence type="ECO:0000255" key="2"/>
<evidence type="ECO:0000305" key="3"/>
<sequence>MNNLVRSNFQDHPFHLVSPSLWPLYTSISLLVLTSNAALAMHNFANGHYSVYLGLILVISSMSFWFRDVITEGSFLGDHTLAVQKGLNLGVILFIVSEALFFMAIFWAFFHSALTPTVELGGQWPPIGIEPINPFELPLLNTVILLSSGATVTYAHHSIIGRNREGALYGSVATVLLAIVFTGFQGVEYSVSSFTISDGAFGTCFYFGTGFHGLHVIIGTIFLLVALWRIFAYHLTDNHHLGFEAGILYWHFVDVVWLFLYISIYYWGS</sequence>
<name>COX3_PYRGI</name>
<geneLocation type="mitochondrion"/>
<proteinExistence type="inferred from homology"/>
<gene>
    <name type="primary">COX3</name>
</gene>
<feature type="chain" id="PRO_0000183805" description="Cytochrome c oxidase subunit 3">
    <location>
        <begin position="1"/>
        <end position="269"/>
    </location>
</feature>
<feature type="transmembrane region" description="Helical" evidence="2">
    <location>
        <begin position="13"/>
        <end position="33"/>
    </location>
</feature>
<feature type="transmembrane region" description="Helical" evidence="2">
    <location>
        <begin position="46"/>
        <end position="66"/>
    </location>
</feature>
<feature type="transmembrane region" description="Helical" evidence="2">
    <location>
        <begin position="90"/>
        <end position="110"/>
    </location>
</feature>
<feature type="transmembrane region" description="Helical" evidence="2">
    <location>
        <begin position="138"/>
        <end position="160"/>
    </location>
</feature>
<feature type="transmembrane region" description="Helical" evidence="2">
    <location>
        <begin position="167"/>
        <end position="187"/>
    </location>
</feature>
<feature type="transmembrane region" description="Helical" evidence="2">
    <location>
        <begin position="207"/>
        <end position="227"/>
    </location>
</feature>
<feature type="transmembrane region" description="Helical" evidence="2">
    <location>
        <begin position="245"/>
        <end position="265"/>
    </location>
</feature>
<organism>
    <name type="scientific">Pyricularia grisea</name>
    <name type="common">Crabgrass-specific blast fungus</name>
    <name type="synonym">Magnaporthe grisea</name>
    <dbReference type="NCBI Taxonomy" id="148305"/>
    <lineage>
        <taxon>Eukaryota</taxon>
        <taxon>Fungi</taxon>
        <taxon>Dikarya</taxon>
        <taxon>Ascomycota</taxon>
        <taxon>Pezizomycotina</taxon>
        <taxon>Sordariomycetes</taxon>
        <taxon>Sordariomycetidae</taxon>
        <taxon>Magnaporthales</taxon>
        <taxon>Pyriculariaceae</taxon>
        <taxon>Pyricularia</taxon>
    </lineage>
</organism>
<keyword id="KW-0472">Membrane</keyword>
<keyword id="KW-0496">Mitochondrion</keyword>
<keyword id="KW-0999">Mitochondrion inner membrane</keyword>
<keyword id="KW-1185">Reference proteome</keyword>
<keyword id="KW-1278">Translocase</keyword>
<keyword id="KW-0812">Transmembrane</keyword>
<keyword id="KW-1133">Transmembrane helix</keyword>
<accession>Q95840</accession>
<dbReference type="EC" id="7.1.1.9"/>
<dbReference type="EMBL" id="D88389">
    <property type="protein sequence ID" value="BAA13605.1"/>
    <property type="molecule type" value="Genomic_DNA"/>
</dbReference>
<dbReference type="SMR" id="Q95840"/>
<dbReference type="Proteomes" id="UP000515153">
    <property type="component" value="Unplaced"/>
</dbReference>
<dbReference type="GO" id="GO:0005743">
    <property type="term" value="C:mitochondrial inner membrane"/>
    <property type="evidence" value="ECO:0007669"/>
    <property type="project" value="UniProtKB-SubCell"/>
</dbReference>
<dbReference type="GO" id="GO:0004129">
    <property type="term" value="F:cytochrome-c oxidase activity"/>
    <property type="evidence" value="ECO:0007669"/>
    <property type="project" value="UniProtKB-EC"/>
</dbReference>
<dbReference type="GO" id="GO:0006123">
    <property type="term" value="P:mitochondrial electron transport, cytochrome c to oxygen"/>
    <property type="evidence" value="ECO:0007669"/>
    <property type="project" value="TreeGrafter"/>
</dbReference>
<dbReference type="CDD" id="cd01665">
    <property type="entry name" value="Cyt_c_Oxidase_III"/>
    <property type="match status" value="1"/>
</dbReference>
<dbReference type="FunFam" id="1.10.287.70:FF:000082">
    <property type="entry name" value="Cytochrome c oxidase subunit 3"/>
    <property type="match status" value="1"/>
</dbReference>
<dbReference type="FunFam" id="1.20.120.80:FF:000002">
    <property type="entry name" value="Cytochrome c oxidase subunit 3"/>
    <property type="match status" value="1"/>
</dbReference>
<dbReference type="Gene3D" id="1.10.287.70">
    <property type="match status" value="1"/>
</dbReference>
<dbReference type="Gene3D" id="1.20.120.80">
    <property type="entry name" value="Cytochrome c oxidase, subunit III, four-helix bundle"/>
    <property type="match status" value="1"/>
</dbReference>
<dbReference type="InterPro" id="IPR024791">
    <property type="entry name" value="Cyt_c/ubiquinol_Oxase_su3"/>
</dbReference>
<dbReference type="InterPro" id="IPR033945">
    <property type="entry name" value="Cyt_c_oxase_su3_dom"/>
</dbReference>
<dbReference type="InterPro" id="IPR000298">
    <property type="entry name" value="Cyt_c_oxidase-like_su3"/>
</dbReference>
<dbReference type="InterPro" id="IPR035973">
    <property type="entry name" value="Cyt_c_oxidase_su3-like_sf"/>
</dbReference>
<dbReference type="InterPro" id="IPR013833">
    <property type="entry name" value="Cyt_c_oxidase_su3_a-hlx"/>
</dbReference>
<dbReference type="PANTHER" id="PTHR11403:SF7">
    <property type="entry name" value="CYTOCHROME C OXIDASE SUBUNIT 3"/>
    <property type="match status" value="1"/>
</dbReference>
<dbReference type="PANTHER" id="PTHR11403">
    <property type="entry name" value="CYTOCHROME C OXIDASE SUBUNIT III"/>
    <property type="match status" value="1"/>
</dbReference>
<dbReference type="Pfam" id="PF00510">
    <property type="entry name" value="COX3"/>
    <property type="match status" value="1"/>
</dbReference>
<dbReference type="SUPFAM" id="SSF81452">
    <property type="entry name" value="Cytochrome c oxidase subunit III-like"/>
    <property type="match status" value="1"/>
</dbReference>
<dbReference type="PROSITE" id="PS50253">
    <property type="entry name" value="COX3"/>
    <property type="match status" value="1"/>
</dbReference>